<dbReference type="EC" id="3.1.-.-" evidence="1"/>
<dbReference type="EMBL" id="CR936503">
    <property type="protein sequence ID" value="CAI54789.1"/>
    <property type="molecule type" value="Genomic_DNA"/>
</dbReference>
<dbReference type="RefSeq" id="WP_011374197.1">
    <property type="nucleotide sequence ID" value="NC_007576.1"/>
</dbReference>
<dbReference type="SMR" id="Q38YD8"/>
<dbReference type="STRING" id="314315.LCA_0489"/>
<dbReference type="GeneID" id="57133352"/>
<dbReference type="KEGG" id="lsa:LCA_0489"/>
<dbReference type="eggNOG" id="COG1418">
    <property type="taxonomic scope" value="Bacteria"/>
</dbReference>
<dbReference type="HOGENOM" id="CLU_028328_1_0_9"/>
<dbReference type="OrthoDB" id="9803205at2"/>
<dbReference type="Proteomes" id="UP000002707">
    <property type="component" value="Chromosome"/>
</dbReference>
<dbReference type="GO" id="GO:0005886">
    <property type="term" value="C:plasma membrane"/>
    <property type="evidence" value="ECO:0007669"/>
    <property type="project" value="UniProtKB-SubCell"/>
</dbReference>
<dbReference type="GO" id="GO:0003723">
    <property type="term" value="F:RNA binding"/>
    <property type="evidence" value="ECO:0007669"/>
    <property type="project" value="UniProtKB-UniRule"/>
</dbReference>
<dbReference type="GO" id="GO:0004521">
    <property type="term" value="F:RNA endonuclease activity"/>
    <property type="evidence" value="ECO:0007669"/>
    <property type="project" value="UniProtKB-UniRule"/>
</dbReference>
<dbReference type="GO" id="GO:0006402">
    <property type="term" value="P:mRNA catabolic process"/>
    <property type="evidence" value="ECO:0007669"/>
    <property type="project" value="UniProtKB-UniRule"/>
</dbReference>
<dbReference type="CDD" id="cd00077">
    <property type="entry name" value="HDc"/>
    <property type="match status" value="1"/>
</dbReference>
<dbReference type="CDD" id="cd22431">
    <property type="entry name" value="KH-I_RNaseY"/>
    <property type="match status" value="1"/>
</dbReference>
<dbReference type="FunFam" id="1.10.3210.10:FF:000003">
    <property type="entry name" value="Ribonuclease Y"/>
    <property type="match status" value="1"/>
</dbReference>
<dbReference type="FunFam" id="3.30.1370.10:FF:000006">
    <property type="entry name" value="Ribonuclease Y"/>
    <property type="match status" value="1"/>
</dbReference>
<dbReference type="Gene3D" id="3.30.300.20">
    <property type="match status" value="1"/>
</dbReference>
<dbReference type="Gene3D" id="1.10.3210.10">
    <property type="entry name" value="Hypothetical protein af1432"/>
    <property type="match status" value="1"/>
</dbReference>
<dbReference type="HAMAP" id="MF_00335">
    <property type="entry name" value="RNase_Y"/>
    <property type="match status" value="1"/>
</dbReference>
<dbReference type="InterPro" id="IPR003607">
    <property type="entry name" value="HD/PDEase_dom"/>
</dbReference>
<dbReference type="InterPro" id="IPR006674">
    <property type="entry name" value="HD_domain"/>
</dbReference>
<dbReference type="InterPro" id="IPR006675">
    <property type="entry name" value="HDIG_dom"/>
</dbReference>
<dbReference type="InterPro" id="IPR004087">
    <property type="entry name" value="KH_dom"/>
</dbReference>
<dbReference type="InterPro" id="IPR015946">
    <property type="entry name" value="KH_dom-like_a/b"/>
</dbReference>
<dbReference type="InterPro" id="IPR004088">
    <property type="entry name" value="KH_dom_type_1"/>
</dbReference>
<dbReference type="InterPro" id="IPR036612">
    <property type="entry name" value="KH_dom_type_1_sf"/>
</dbReference>
<dbReference type="InterPro" id="IPR017705">
    <property type="entry name" value="Ribonuclease_Y"/>
</dbReference>
<dbReference type="InterPro" id="IPR022711">
    <property type="entry name" value="RNase_Y_N"/>
</dbReference>
<dbReference type="NCBIfam" id="TIGR00277">
    <property type="entry name" value="HDIG"/>
    <property type="match status" value="1"/>
</dbReference>
<dbReference type="NCBIfam" id="TIGR03319">
    <property type="entry name" value="RNase_Y"/>
    <property type="match status" value="1"/>
</dbReference>
<dbReference type="PANTHER" id="PTHR12826">
    <property type="entry name" value="RIBONUCLEASE Y"/>
    <property type="match status" value="1"/>
</dbReference>
<dbReference type="PANTHER" id="PTHR12826:SF15">
    <property type="entry name" value="RIBONUCLEASE Y"/>
    <property type="match status" value="1"/>
</dbReference>
<dbReference type="Pfam" id="PF01966">
    <property type="entry name" value="HD"/>
    <property type="match status" value="1"/>
</dbReference>
<dbReference type="Pfam" id="PF00013">
    <property type="entry name" value="KH_1"/>
    <property type="match status" value="1"/>
</dbReference>
<dbReference type="Pfam" id="PF12072">
    <property type="entry name" value="RNase_Y_N"/>
    <property type="match status" value="1"/>
</dbReference>
<dbReference type="SMART" id="SM00471">
    <property type="entry name" value="HDc"/>
    <property type="match status" value="1"/>
</dbReference>
<dbReference type="SMART" id="SM00322">
    <property type="entry name" value="KH"/>
    <property type="match status" value="1"/>
</dbReference>
<dbReference type="SUPFAM" id="SSF54791">
    <property type="entry name" value="Eukaryotic type KH-domain (KH-domain type I)"/>
    <property type="match status" value="1"/>
</dbReference>
<dbReference type="SUPFAM" id="SSF109604">
    <property type="entry name" value="HD-domain/PDEase-like"/>
    <property type="match status" value="1"/>
</dbReference>
<dbReference type="PROSITE" id="PS51831">
    <property type="entry name" value="HD"/>
    <property type="match status" value="1"/>
</dbReference>
<dbReference type="PROSITE" id="PS50084">
    <property type="entry name" value="KH_TYPE_1"/>
    <property type="match status" value="1"/>
</dbReference>
<reference key="1">
    <citation type="journal article" date="2005" name="Nat. Biotechnol.">
        <title>The complete genome sequence of the meat-borne lactic acid bacterium Lactobacillus sakei 23K.</title>
        <authorList>
            <person name="Chaillou S."/>
            <person name="Champomier-Verges M.-C."/>
            <person name="Cornet M."/>
            <person name="Crutz-Le Coq A.-M."/>
            <person name="Dudez A.-M."/>
            <person name="Martin V."/>
            <person name="Beaufils S."/>
            <person name="Darbon-Rongere E."/>
            <person name="Bossy R."/>
            <person name="Loux V."/>
            <person name="Zagorec M."/>
        </authorList>
    </citation>
    <scope>NUCLEOTIDE SEQUENCE [LARGE SCALE GENOMIC DNA]</scope>
    <source>
        <strain>23K</strain>
    </source>
</reference>
<keyword id="KW-1003">Cell membrane</keyword>
<keyword id="KW-0255">Endonuclease</keyword>
<keyword id="KW-0378">Hydrolase</keyword>
<keyword id="KW-0472">Membrane</keyword>
<keyword id="KW-0540">Nuclease</keyword>
<keyword id="KW-1185">Reference proteome</keyword>
<keyword id="KW-0694">RNA-binding</keyword>
<keyword id="KW-0812">Transmembrane</keyword>
<keyword id="KW-1133">Transmembrane helix</keyword>
<protein>
    <recommendedName>
        <fullName evidence="1">Ribonuclease Y</fullName>
        <shortName evidence="1">RNase Y</shortName>
        <ecNumber evidence="1">3.1.-.-</ecNumber>
    </recommendedName>
</protein>
<gene>
    <name evidence="1" type="primary">rny</name>
    <name type="ordered locus">LCA_0489</name>
</gene>
<organism>
    <name type="scientific">Latilactobacillus sakei subsp. sakei (strain 23K)</name>
    <name type="common">Lactobacillus sakei subsp. sakei</name>
    <dbReference type="NCBI Taxonomy" id="314315"/>
    <lineage>
        <taxon>Bacteria</taxon>
        <taxon>Bacillati</taxon>
        <taxon>Bacillota</taxon>
        <taxon>Bacilli</taxon>
        <taxon>Lactobacillales</taxon>
        <taxon>Lactobacillaceae</taxon>
        <taxon>Latilactobacillus</taxon>
    </lineage>
</organism>
<feature type="chain" id="PRO_0000344897" description="Ribonuclease Y">
    <location>
        <begin position="1"/>
        <end position="521"/>
    </location>
</feature>
<feature type="transmembrane region" description="Helical" evidence="1">
    <location>
        <begin position="5"/>
        <end position="25"/>
    </location>
</feature>
<feature type="domain" description="KH" evidence="1">
    <location>
        <begin position="211"/>
        <end position="271"/>
    </location>
</feature>
<feature type="domain" description="HD" evidence="2">
    <location>
        <begin position="337"/>
        <end position="430"/>
    </location>
</feature>
<feature type="region of interest" description="Disordered" evidence="3">
    <location>
        <begin position="77"/>
        <end position="107"/>
    </location>
</feature>
<comment type="function">
    <text evidence="1">Endoribonuclease that initiates mRNA decay.</text>
</comment>
<comment type="subcellular location">
    <subcellularLocation>
        <location evidence="1">Cell membrane</location>
        <topology evidence="1">Single-pass membrane protein</topology>
    </subcellularLocation>
</comment>
<comment type="similarity">
    <text evidence="1">Belongs to the RNase Y family.</text>
</comment>
<name>RNY_LATSS</name>
<evidence type="ECO:0000255" key="1">
    <source>
        <dbReference type="HAMAP-Rule" id="MF_00335"/>
    </source>
</evidence>
<evidence type="ECO:0000255" key="2">
    <source>
        <dbReference type="PROSITE-ProRule" id="PRU01175"/>
    </source>
</evidence>
<evidence type="ECO:0000256" key="3">
    <source>
        <dbReference type="SAM" id="MobiDB-lite"/>
    </source>
</evidence>
<accession>Q38YD8</accession>
<sequence length="521" mass="58501">MNLDLLLILTAVIMLIVGFAVGAILQKKAHEREIDGANKTAKGIIELAEKEAATRKKEILLEAKDENHQYRSEIENELKDRRGEVQKQENRLIQREETMDRKDATLDKKERTLEEHESRLAEQAQQLKEKQAEVETLVEQQRTKLQEIAELSHDDAQKIILDETKRNLDHERAVLIKESEESAKEHADRTAKTLVAEAIQRSAADMVAETTVTVVTLPNDDMKGRIIGREGRNIRTLETLTGIDLIIDDTPEAVVLSGFDPIRREIARMTLEKLIQDGRIHPARIEEMVDKSRKEMDEQIRQIGEQAIFDVGIHTMHPDLIKILGRLHFRTSYGQNVLNHSIEVAKLTGILAAELGEDVTLAKRAGLLHDIGKALDHEVDGSHVEIGVELATRYKEPATVINAIGSHHGDIEATSIISVLVAASDAISAARPGARSESLENYIHRLEKLESITNSFKGVDHSFAIQAGREVRVIVKPEQVTDDQATVLARDVKNQIEDQLEYPGHIKVTVIRETRTVEYAK</sequence>
<proteinExistence type="inferred from homology"/>